<accession>Q8FPD5</accession>
<gene>
    <name evidence="1" type="primary">miaB</name>
    <name type="ordered locus">CE1843</name>
</gene>
<comment type="function">
    <text evidence="1">Catalyzes the methylthiolation of N6-(dimethylallyl)adenosine (i(6)A), leading to the formation of 2-methylthio-N6-(dimethylallyl)adenosine (ms(2)i(6)A) at position 37 in tRNAs that read codons beginning with uridine.</text>
</comment>
<comment type="catalytic activity">
    <reaction evidence="1">
        <text>N(6)-dimethylallyladenosine(37) in tRNA + (sulfur carrier)-SH + AH2 + 2 S-adenosyl-L-methionine = 2-methylsulfanyl-N(6)-dimethylallyladenosine(37) in tRNA + (sulfur carrier)-H + 5'-deoxyadenosine + L-methionine + A + S-adenosyl-L-homocysteine + 2 H(+)</text>
        <dbReference type="Rhea" id="RHEA:37067"/>
        <dbReference type="Rhea" id="RHEA-COMP:10375"/>
        <dbReference type="Rhea" id="RHEA-COMP:10376"/>
        <dbReference type="Rhea" id="RHEA-COMP:14737"/>
        <dbReference type="Rhea" id="RHEA-COMP:14739"/>
        <dbReference type="ChEBI" id="CHEBI:13193"/>
        <dbReference type="ChEBI" id="CHEBI:15378"/>
        <dbReference type="ChEBI" id="CHEBI:17319"/>
        <dbReference type="ChEBI" id="CHEBI:17499"/>
        <dbReference type="ChEBI" id="CHEBI:29917"/>
        <dbReference type="ChEBI" id="CHEBI:57844"/>
        <dbReference type="ChEBI" id="CHEBI:57856"/>
        <dbReference type="ChEBI" id="CHEBI:59789"/>
        <dbReference type="ChEBI" id="CHEBI:64428"/>
        <dbReference type="ChEBI" id="CHEBI:74415"/>
        <dbReference type="ChEBI" id="CHEBI:74417"/>
        <dbReference type="EC" id="2.8.4.3"/>
    </reaction>
</comment>
<comment type="cofactor">
    <cofactor evidence="1">
        <name>[4Fe-4S] cluster</name>
        <dbReference type="ChEBI" id="CHEBI:49883"/>
    </cofactor>
    <text evidence="1">Binds 2 [4Fe-4S] clusters. One cluster is coordinated with 3 cysteines and an exchangeable S-adenosyl-L-methionine.</text>
</comment>
<comment type="subunit">
    <text evidence="1">Monomer.</text>
</comment>
<comment type="subcellular location">
    <subcellularLocation>
        <location evidence="1">Cytoplasm</location>
    </subcellularLocation>
</comment>
<comment type="similarity">
    <text evidence="1">Belongs to the methylthiotransferase family. MiaB subfamily.</text>
</comment>
<comment type="sequence caution" evidence="4">
    <conflict type="erroneous initiation">
        <sequence resource="EMBL-CDS" id="BAC18653"/>
    </conflict>
</comment>
<reference key="1">
    <citation type="journal article" date="2003" name="Genome Res.">
        <title>Comparative complete genome sequence analysis of the amino acid replacements responsible for the thermostability of Corynebacterium efficiens.</title>
        <authorList>
            <person name="Nishio Y."/>
            <person name="Nakamura Y."/>
            <person name="Kawarabayasi Y."/>
            <person name="Usuda Y."/>
            <person name="Kimura E."/>
            <person name="Sugimoto S."/>
            <person name="Matsui K."/>
            <person name="Yamagishi A."/>
            <person name="Kikuchi H."/>
            <person name="Ikeo K."/>
            <person name="Gojobori T."/>
        </authorList>
    </citation>
    <scope>NUCLEOTIDE SEQUENCE [LARGE SCALE GENOMIC DNA]</scope>
    <source>
        <strain>DSM 44549 / YS-314 / AJ 12310 / JCM 11189 / NBRC 100395</strain>
    </source>
</reference>
<organism>
    <name type="scientific">Corynebacterium efficiens (strain DSM 44549 / YS-314 / AJ 12310 / JCM 11189 / NBRC 100395)</name>
    <dbReference type="NCBI Taxonomy" id="196164"/>
    <lineage>
        <taxon>Bacteria</taxon>
        <taxon>Bacillati</taxon>
        <taxon>Actinomycetota</taxon>
        <taxon>Actinomycetes</taxon>
        <taxon>Mycobacteriales</taxon>
        <taxon>Corynebacteriaceae</taxon>
        <taxon>Corynebacterium</taxon>
    </lineage>
</organism>
<feature type="chain" id="PRO_0000374239" description="tRNA-2-methylthio-N(6)-dimethylallyladenosine synthase">
    <location>
        <begin position="1"/>
        <end position="524"/>
    </location>
</feature>
<feature type="domain" description="MTTase N-terminal" evidence="1">
    <location>
        <begin position="27"/>
        <end position="143"/>
    </location>
</feature>
<feature type="domain" description="Radical SAM core" evidence="2">
    <location>
        <begin position="166"/>
        <end position="402"/>
    </location>
</feature>
<feature type="domain" description="TRAM" evidence="1">
    <location>
        <begin position="405"/>
        <end position="476"/>
    </location>
</feature>
<feature type="region of interest" description="Disordered" evidence="3">
    <location>
        <begin position="1"/>
        <end position="23"/>
    </location>
</feature>
<feature type="compositionally biased region" description="Basic and acidic residues" evidence="3">
    <location>
        <begin position="1"/>
        <end position="12"/>
    </location>
</feature>
<feature type="binding site" evidence="1">
    <location>
        <position position="36"/>
    </location>
    <ligand>
        <name>[4Fe-4S] cluster</name>
        <dbReference type="ChEBI" id="CHEBI:49883"/>
        <label>1</label>
    </ligand>
</feature>
<feature type="binding site" evidence="1">
    <location>
        <position position="72"/>
    </location>
    <ligand>
        <name>[4Fe-4S] cluster</name>
        <dbReference type="ChEBI" id="CHEBI:49883"/>
        <label>1</label>
    </ligand>
</feature>
<feature type="binding site" evidence="1">
    <location>
        <position position="106"/>
    </location>
    <ligand>
        <name>[4Fe-4S] cluster</name>
        <dbReference type="ChEBI" id="CHEBI:49883"/>
        <label>1</label>
    </ligand>
</feature>
<feature type="binding site" evidence="1">
    <location>
        <position position="180"/>
    </location>
    <ligand>
        <name>[4Fe-4S] cluster</name>
        <dbReference type="ChEBI" id="CHEBI:49883"/>
        <label>2</label>
        <note>4Fe-4S-S-AdoMet</note>
    </ligand>
</feature>
<feature type="binding site" evidence="1">
    <location>
        <position position="184"/>
    </location>
    <ligand>
        <name>[4Fe-4S] cluster</name>
        <dbReference type="ChEBI" id="CHEBI:49883"/>
        <label>2</label>
        <note>4Fe-4S-S-AdoMet</note>
    </ligand>
</feature>
<feature type="binding site" evidence="1">
    <location>
        <position position="187"/>
    </location>
    <ligand>
        <name>[4Fe-4S] cluster</name>
        <dbReference type="ChEBI" id="CHEBI:49883"/>
        <label>2</label>
        <note>4Fe-4S-S-AdoMet</note>
    </ligand>
</feature>
<name>MIAB_COREF</name>
<sequence length="524" mass="57065">MNTHPSHPDHPADTLPARGNREGTTARTYEVRTFGCQMNVHDSERLSGLLEEAGYTAAGEGDTPDLIVFNTCAVRENADQRLYGTLGNLRAVKENHPGMQIAVGGCLAQKDKDTVVKKAPWVDVVFGTHNIASLPTLLNRAEHNQKAEVEIVDSLEQFPSVLPAKRESAYAGWVSVSVGCNNTCTFCIVPSLRGKEQDRRPGDILAEVQALVDQGVSEVTLLGQNVNAYGVNFVDPELERDRSAFSKLLRACGDIEGLERVRFTSPHPAEFTSDVIDAMAETPNICPQLHMPLQSGSDRVLKEMRRSYRSAKFLAILDEVRAKIPHASITTDIIVGFPGETEEDFQATLDVVEKARFTSAYTFQYSPRPGTPAADYENQVPKKVVQERYERLMALQERICEEENQKFIGQTVELLVQAGGGRKNDATKRMSGRARDGRLVHFTPVGTIDGEIRPGDVVTVEVTEAKPFFLIADAGVLTHRRTRAGDNSAVGQVPTTAPIGVGLGLPRIGAPVPAPATPDNACGC</sequence>
<dbReference type="EC" id="2.8.4.3" evidence="1"/>
<dbReference type="EMBL" id="BA000035">
    <property type="protein sequence ID" value="BAC18653.1"/>
    <property type="status" value="ALT_INIT"/>
    <property type="molecule type" value="Genomic_DNA"/>
</dbReference>
<dbReference type="SMR" id="Q8FPD5"/>
<dbReference type="STRING" id="196164.gene:10742271"/>
<dbReference type="KEGG" id="cef:CE1843"/>
<dbReference type="eggNOG" id="COG0621">
    <property type="taxonomic scope" value="Bacteria"/>
</dbReference>
<dbReference type="HOGENOM" id="CLU_018697_2_2_11"/>
<dbReference type="Proteomes" id="UP000001409">
    <property type="component" value="Chromosome"/>
</dbReference>
<dbReference type="GO" id="GO:0005829">
    <property type="term" value="C:cytosol"/>
    <property type="evidence" value="ECO:0007669"/>
    <property type="project" value="TreeGrafter"/>
</dbReference>
<dbReference type="GO" id="GO:0051539">
    <property type="term" value="F:4 iron, 4 sulfur cluster binding"/>
    <property type="evidence" value="ECO:0007669"/>
    <property type="project" value="UniProtKB-UniRule"/>
</dbReference>
<dbReference type="GO" id="GO:0046872">
    <property type="term" value="F:metal ion binding"/>
    <property type="evidence" value="ECO:0007669"/>
    <property type="project" value="UniProtKB-KW"/>
</dbReference>
<dbReference type="GO" id="GO:0035597">
    <property type="term" value="F:N6-isopentenyladenosine methylthiotransferase activity"/>
    <property type="evidence" value="ECO:0007669"/>
    <property type="project" value="TreeGrafter"/>
</dbReference>
<dbReference type="CDD" id="cd01335">
    <property type="entry name" value="Radical_SAM"/>
    <property type="match status" value="1"/>
</dbReference>
<dbReference type="FunFam" id="3.40.50.12160:FF:000003">
    <property type="entry name" value="CDK5 regulatory subunit-associated protein 1"/>
    <property type="match status" value="1"/>
</dbReference>
<dbReference type="FunFam" id="3.80.30.20:FF:000001">
    <property type="entry name" value="tRNA-2-methylthio-N(6)-dimethylallyladenosine synthase 2"/>
    <property type="match status" value="1"/>
</dbReference>
<dbReference type="Gene3D" id="3.40.50.12160">
    <property type="entry name" value="Methylthiotransferase, N-terminal domain"/>
    <property type="match status" value="1"/>
</dbReference>
<dbReference type="Gene3D" id="3.80.30.20">
    <property type="entry name" value="tm_1862 like domain"/>
    <property type="match status" value="1"/>
</dbReference>
<dbReference type="HAMAP" id="MF_01864">
    <property type="entry name" value="tRNA_metthiotr_MiaB"/>
    <property type="match status" value="1"/>
</dbReference>
<dbReference type="InterPro" id="IPR006638">
    <property type="entry name" value="Elp3/MiaA/NifB-like_rSAM"/>
</dbReference>
<dbReference type="InterPro" id="IPR005839">
    <property type="entry name" value="Methylthiotransferase"/>
</dbReference>
<dbReference type="InterPro" id="IPR020612">
    <property type="entry name" value="Methylthiotransferase_CS"/>
</dbReference>
<dbReference type="InterPro" id="IPR013848">
    <property type="entry name" value="Methylthiotransferase_N"/>
</dbReference>
<dbReference type="InterPro" id="IPR038135">
    <property type="entry name" value="Methylthiotransferase_N_sf"/>
</dbReference>
<dbReference type="InterPro" id="IPR006463">
    <property type="entry name" value="MiaB_methiolase"/>
</dbReference>
<dbReference type="InterPro" id="IPR007197">
    <property type="entry name" value="rSAM"/>
</dbReference>
<dbReference type="InterPro" id="IPR023404">
    <property type="entry name" value="rSAM_horseshoe"/>
</dbReference>
<dbReference type="InterPro" id="IPR002792">
    <property type="entry name" value="TRAM_dom"/>
</dbReference>
<dbReference type="NCBIfam" id="TIGR01574">
    <property type="entry name" value="miaB-methiolase"/>
    <property type="match status" value="1"/>
</dbReference>
<dbReference type="NCBIfam" id="TIGR00089">
    <property type="entry name" value="MiaB/RimO family radical SAM methylthiotransferase"/>
    <property type="match status" value="1"/>
</dbReference>
<dbReference type="PANTHER" id="PTHR43020">
    <property type="entry name" value="CDK5 REGULATORY SUBUNIT-ASSOCIATED PROTEIN 1"/>
    <property type="match status" value="1"/>
</dbReference>
<dbReference type="PANTHER" id="PTHR43020:SF2">
    <property type="entry name" value="MITOCHONDRIAL TRNA METHYLTHIOTRANSFERASE CDK5RAP1"/>
    <property type="match status" value="1"/>
</dbReference>
<dbReference type="Pfam" id="PF04055">
    <property type="entry name" value="Radical_SAM"/>
    <property type="match status" value="1"/>
</dbReference>
<dbReference type="Pfam" id="PF00919">
    <property type="entry name" value="UPF0004"/>
    <property type="match status" value="1"/>
</dbReference>
<dbReference type="SFLD" id="SFLDF00273">
    <property type="entry name" value="(dimethylallyl)adenosine_tRNA"/>
    <property type="match status" value="1"/>
</dbReference>
<dbReference type="SFLD" id="SFLDG01082">
    <property type="entry name" value="B12-binding_domain_containing"/>
    <property type="match status" value="1"/>
</dbReference>
<dbReference type="SFLD" id="SFLDG01061">
    <property type="entry name" value="methylthiotransferase"/>
    <property type="match status" value="1"/>
</dbReference>
<dbReference type="SMART" id="SM00729">
    <property type="entry name" value="Elp3"/>
    <property type="match status" value="1"/>
</dbReference>
<dbReference type="SUPFAM" id="SSF102114">
    <property type="entry name" value="Radical SAM enzymes"/>
    <property type="match status" value="1"/>
</dbReference>
<dbReference type="PROSITE" id="PS51449">
    <property type="entry name" value="MTTASE_N"/>
    <property type="match status" value="1"/>
</dbReference>
<dbReference type="PROSITE" id="PS01278">
    <property type="entry name" value="MTTASE_RADICAL"/>
    <property type="match status" value="1"/>
</dbReference>
<dbReference type="PROSITE" id="PS51918">
    <property type="entry name" value="RADICAL_SAM"/>
    <property type="match status" value="1"/>
</dbReference>
<dbReference type="PROSITE" id="PS50926">
    <property type="entry name" value="TRAM"/>
    <property type="match status" value="1"/>
</dbReference>
<protein>
    <recommendedName>
        <fullName evidence="1">tRNA-2-methylthio-N(6)-dimethylallyladenosine synthase</fullName>
        <ecNumber evidence="1">2.8.4.3</ecNumber>
    </recommendedName>
    <alternativeName>
        <fullName evidence="1">(Dimethylallyl)adenosine tRNA methylthiotransferase MiaB</fullName>
    </alternativeName>
    <alternativeName>
        <fullName evidence="1">tRNA-i(6)A37 methylthiotransferase</fullName>
    </alternativeName>
</protein>
<keyword id="KW-0004">4Fe-4S</keyword>
<keyword id="KW-0963">Cytoplasm</keyword>
<keyword id="KW-0408">Iron</keyword>
<keyword id="KW-0411">Iron-sulfur</keyword>
<keyword id="KW-0479">Metal-binding</keyword>
<keyword id="KW-1185">Reference proteome</keyword>
<keyword id="KW-0949">S-adenosyl-L-methionine</keyword>
<keyword id="KW-0808">Transferase</keyword>
<keyword id="KW-0819">tRNA processing</keyword>
<evidence type="ECO:0000255" key="1">
    <source>
        <dbReference type="HAMAP-Rule" id="MF_01864"/>
    </source>
</evidence>
<evidence type="ECO:0000255" key="2">
    <source>
        <dbReference type="PROSITE-ProRule" id="PRU01266"/>
    </source>
</evidence>
<evidence type="ECO:0000256" key="3">
    <source>
        <dbReference type="SAM" id="MobiDB-lite"/>
    </source>
</evidence>
<evidence type="ECO:0000305" key="4"/>
<proteinExistence type="inferred from homology"/>